<protein>
    <recommendedName>
        <fullName>Alanyl-tRNA editing protein AlaX-S</fullName>
        <shortName>AlaX-S</shortName>
    </recommendedName>
    <alternativeName>
        <fullName>Alanyl-tRNA deacylase AlaX-S</fullName>
    </alternativeName>
    <alternativeName>
        <fullName>PhoAlaX</fullName>
    </alternativeName>
</protein>
<accession>O58307</accession>
<reference key="1">
    <citation type="journal article" date="1998" name="DNA Res.">
        <title>Complete sequence and gene organization of the genome of a hyper-thermophilic archaebacterium, Pyrococcus horikoshii OT3.</title>
        <authorList>
            <person name="Kawarabayasi Y."/>
            <person name="Sawada M."/>
            <person name="Horikawa H."/>
            <person name="Haikawa Y."/>
            <person name="Hino Y."/>
            <person name="Yamamoto S."/>
            <person name="Sekine M."/>
            <person name="Baba S."/>
            <person name="Kosugi H."/>
            <person name="Hosoyama A."/>
            <person name="Nagai Y."/>
            <person name="Sakai M."/>
            <person name="Ogura K."/>
            <person name="Otsuka R."/>
            <person name="Nakazawa H."/>
            <person name="Takamiya M."/>
            <person name="Ohfuku Y."/>
            <person name="Funahashi T."/>
            <person name="Tanaka T."/>
            <person name="Kudoh Y."/>
            <person name="Yamazaki J."/>
            <person name="Kushida N."/>
            <person name="Oguchi A."/>
            <person name="Aoki K."/>
            <person name="Yoshizawa T."/>
            <person name="Nakamura Y."/>
            <person name="Robb F.T."/>
            <person name="Horikoshi K."/>
            <person name="Masuchi Y."/>
            <person name="Shizuya H."/>
            <person name="Kikuchi H."/>
        </authorList>
    </citation>
    <scope>NUCLEOTIDE SEQUENCE [LARGE SCALE GENOMIC DNA]</scope>
    <source>
        <strain>ATCC 700860 / DSM 12428 / JCM 9974 / NBRC 100139 / OT-3</strain>
    </source>
</reference>
<reference key="2">
    <citation type="journal article" date="2005" name="Proc. Natl. Acad. Sci. U.S.A.">
        <title>Molecular basis of alanine discrimination in editing site.</title>
        <authorList>
            <person name="Sokabe M."/>
            <person name="Okada A."/>
            <person name="Yao M."/>
            <person name="Nakashima T."/>
            <person name="Tanaka I."/>
        </authorList>
    </citation>
    <scope>X-RAY CRYSTALLOGRAPHY (1.88 ANGSTROMS) OF THE APO FORM IN COMPLEX WITH ZINC WITH AND WITHOUT NON-COGNATE SERINE</scope>
    <scope>CHARACTERIZATION</scope>
    <scope>SUBUNIT</scope>
    <scope>COFACTOR</scope>
    <scope>MUTAGENESIS OF THR-30</scope>
</reference>
<reference key="3">
    <citation type="journal article" date="2006" name="Proteins">
        <title>Crystal structure of alanyl-tRNA synthetase editing-domain homolog (PH0574) from a hyperthermophile, Pyrococcus horikoshii OT3 at 1.45 A resolution.</title>
        <authorList>
            <person name="Ishijima J."/>
            <person name="Uchida Y."/>
            <person name="Kuroishi C."/>
            <person name="Tuzuki C."/>
            <person name="Takahashi N."/>
            <person name="Okazaki N."/>
            <person name="Yutani K."/>
            <person name="Miyano M."/>
        </authorList>
    </citation>
    <scope>X-RAY CRYSTALLOGRAPHY (1.45 ANGSTROMS)</scope>
    <scope>COFACTOR</scope>
    <scope>SUBUNIT</scope>
    <source>
        <strain>ATCC 700860 / DSM 12428 / JCM 9974 / NBRC 100139 / OT-3</strain>
    </source>
</reference>
<proteinExistence type="evidence at protein level"/>
<evidence type="ECO:0000269" key="1">
    <source>
    </source>
</evidence>
<evidence type="ECO:0000269" key="2">
    <source>
    </source>
</evidence>
<evidence type="ECO:0000305" key="3"/>
<evidence type="ECO:0007829" key="4">
    <source>
        <dbReference type="PDB" id="1V4P"/>
    </source>
</evidence>
<comment type="function">
    <text>Functions in trans to edit the amino acid moiety from mischarged charged Ser-tRNA(Ala). Has little activity against Gly-tRNA(Ala).</text>
</comment>
<comment type="cofactor">
    <cofactor evidence="1 2">
        <name>Zn(2+)</name>
        <dbReference type="ChEBI" id="CHEBI:29105"/>
    </cofactor>
    <text evidence="1 2">Binds 1 zinc ion per subunit; the homodimer seems not to bind zinc. The zinc is probably not catalytic (PubMed:16087889). Another report suggests the zinc is catalytic (PubMed:16374837).</text>
</comment>
<comment type="subunit">
    <text evidence="1 2">Monomer and homodimer; the dimer is less active in tRNA editing and does not have a zinc ion associated with it (PubMed:16087889). Another report shows only a monomeric form (PubMed:16374837).</text>
</comment>
<comment type="subcellular location">
    <subcellularLocation>
        <location evidence="3">Cytoplasm</location>
    </subcellularLocation>
</comment>
<comment type="similarity">
    <text evidence="3">Belongs to the class-II aminoacyl-tRNA synthetase family. Editing domain AlaX-S subfamily.</text>
</comment>
<dbReference type="EMBL" id="BA000001">
    <property type="protein sequence ID" value="BAA29663.1"/>
    <property type="molecule type" value="Genomic_DNA"/>
</dbReference>
<dbReference type="PIR" id="B71172">
    <property type="entry name" value="B71172"/>
</dbReference>
<dbReference type="RefSeq" id="WP_010884673.1">
    <property type="nucleotide sequence ID" value="NC_000961.1"/>
</dbReference>
<dbReference type="PDB" id="1V4P">
    <property type="method" value="X-ray"/>
    <property type="resolution" value="1.45 A"/>
    <property type="chains" value="A/B/C=1-157"/>
</dbReference>
<dbReference type="PDB" id="1V7O">
    <property type="method" value="X-ray"/>
    <property type="resolution" value="2.62 A"/>
    <property type="chains" value="A/B=1-157"/>
</dbReference>
<dbReference type="PDB" id="1WNU">
    <property type="method" value="X-ray"/>
    <property type="resolution" value="2.80 A"/>
    <property type="chains" value="A/B=1-157"/>
</dbReference>
<dbReference type="PDB" id="1WXO">
    <property type="method" value="X-ray"/>
    <property type="resolution" value="1.88 A"/>
    <property type="chains" value="A/B/C=1-157"/>
</dbReference>
<dbReference type="PDB" id="3RFN">
    <property type="method" value="X-ray"/>
    <property type="resolution" value="1.80 A"/>
    <property type="chains" value="A=2-154"/>
</dbReference>
<dbReference type="PDB" id="3RHU">
    <property type="method" value="X-ray"/>
    <property type="resolution" value="2.80 A"/>
    <property type="chains" value="A/B=2-154"/>
</dbReference>
<dbReference type="PDBsum" id="1V4P"/>
<dbReference type="PDBsum" id="1V7O"/>
<dbReference type="PDBsum" id="1WNU"/>
<dbReference type="PDBsum" id="1WXO"/>
<dbReference type="PDBsum" id="3RFN"/>
<dbReference type="PDBsum" id="3RHU"/>
<dbReference type="SMR" id="O58307"/>
<dbReference type="STRING" id="70601.gene:9377513"/>
<dbReference type="EnsemblBacteria" id="BAA29663">
    <property type="protein sequence ID" value="BAA29663"/>
    <property type="gene ID" value="BAA29663"/>
</dbReference>
<dbReference type="GeneID" id="1442907"/>
<dbReference type="KEGG" id="pho:PH0574"/>
<dbReference type="eggNOG" id="arCOG01256">
    <property type="taxonomic scope" value="Archaea"/>
</dbReference>
<dbReference type="OrthoDB" id="36064at2157"/>
<dbReference type="BRENDA" id="6.1.1.7">
    <property type="organism ID" value="5244"/>
</dbReference>
<dbReference type="EvolutionaryTrace" id="O58307"/>
<dbReference type="Proteomes" id="UP000000752">
    <property type="component" value="Chromosome"/>
</dbReference>
<dbReference type="GO" id="GO:0005737">
    <property type="term" value="C:cytoplasm"/>
    <property type="evidence" value="ECO:0007669"/>
    <property type="project" value="UniProtKB-SubCell"/>
</dbReference>
<dbReference type="GO" id="GO:0002161">
    <property type="term" value="F:aminoacyl-tRNA deacylase activity"/>
    <property type="evidence" value="ECO:0000314"/>
    <property type="project" value="UniProtKB"/>
</dbReference>
<dbReference type="GO" id="GO:0004812">
    <property type="term" value="F:aminoacyl-tRNA ligase activity"/>
    <property type="evidence" value="ECO:0007669"/>
    <property type="project" value="InterPro"/>
</dbReference>
<dbReference type="GO" id="GO:0005524">
    <property type="term" value="F:ATP binding"/>
    <property type="evidence" value="ECO:0007669"/>
    <property type="project" value="InterPro"/>
</dbReference>
<dbReference type="GO" id="GO:0046872">
    <property type="term" value="F:metal ion binding"/>
    <property type="evidence" value="ECO:0007669"/>
    <property type="project" value="UniProtKB-KW"/>
</dbReference>
<dbReference type="GO" id="GO:0043039">
    <property type="term" value="P:tRNA aminoacylation"/>
    <property type="evidence" value="ECO:0007669"/>
    <property type="project" value="InterPro"/>
</dbReference>
<dbReference type="Gene3D" id="3.30.980.10">
    <property type="entry name" value="Threonyl-trna Synthetase, Chain A, domain 2"/>
    <property type="match status" value="2"/>
</dbReference>
<dbReference type="InterPro" id="IPR051335">
    <property type="entry name" value="Alanyl-tRNA_Editing_Enzymes"/>
</dbReference>
<dbReference type="InterPro" id="IPR018163">
    <property type="entry name" value="Thr/Ala-tRNA-synth_IIc_edit"/>
</dbReference>
<dbReference type="InterPro" id="IPR012947">
    <property type="entry name" value="tRNA_SAD"/>
</dbReference>
<dbReference type="PANTHER" id="PTHR43462">
    <property type="entry name" value="ALANYL-TRNA EDITING PROTEIN"/>
    <property type="match status" value="1"/>
</dbReference>
<dbReference type="PANTHER" id="PTHR43462:SF1">
    <property type="entry name" value="ALANYL-TRNA EDITING PROTEIN AARSD1"/>
    <property type="match status" value="1"/>
</dbReference>
<dbReference type="Pfam" id="PF07973">
    <property type="entry name" value="tRNA_SAD"/>
    <property type="match status" value="1"/>
</dbReference>
<dbReference type="SUPFAM" id="SSF55186">
    <property type="entry name" value="ThrRS/AlaRS common domain"/>
    <property type="match status" value="1"/>
</dbReference>
<name>ALAXS_PYRHO</name>
<keyword id="KW-0002">3D-structure</keyword>
<keyword id="KW-0963">Cytoplasm</keyword>
<keyword id="KW-0479">Metal-binding</keyword>
<keyword id="KW-0862">Zinc</keyword>
<feature type="chain" id="PRO_0000391644" description="Alanyl-tRNA editing protein AlaX-S">
    <location>
        <begin position="1"/>
        <end position="157"/>
    </location>
</feature>
<feature type="binding site">
    <location>
        <position position="9"/>
    </location>
    <ligand>
        <name>Zn(2+)</name>
        <dbReference type="ChEBI" id="CHEBI:29105"/>
    </ligand>
</feature>
<feature type="binding site">
    <location>
        <position position="13"/>
    </location>
    <ligand>
        <name>Zn(2+)</name>
        <dbReference type="ChEBI" id="CHEBI:29105"/>
    </ligand>
</feature>
<feature type="binding site">
    <location>
        <position position="116"/>
    </location>
    <ligand>
        <name>Zn(2+)</name>
        <dbReference type="ChEBI" id="CHEBI:29105"/>
    </ligand>
</feature>
<feature type="binding site">
    <location>
        <position position="120"/>
    </location>
    <ligand>
        <name>Zn(2+)</name>
        <dbReference type="ChEBI" id="CHEBI:29105"/>
    </ligand>
</feature>
<feature type="mutagenesis site" description="Significant deacylation of correctly charged L-alanyl-tRNA(Ala) occurs." evidence="1">
    <original>T</original>
    <variation>V</variation>
    <location>
        <position position="30"/>
    </location>
</feature>
<feature type="helix" evidence="4">
    <location>
        <begin position="4"/>
        <end position="23"/>
    </location>
</feature>
<feature type="helix" evidence="4">
    <location>
        <begin position="25"/>
        <end position="27"/>
    </location>
</feature>
<feature type="strand" evidence="4">
    <location>
        <begin position="30"/>
        <end position="36"/>
    </location>
</feature>
<feature type="strand" evidence="4">
    <location>
        <begin position="39"/>
        <end position="45"/>
    </location>
</feature>
<feature type="helix" evidence="4">
    <location>
        <begin position="52"/>
        <end position="68"/>
    </location>
</feature>
<feature type="strand" evidence="4">
    <location>
        <begin position="73"/>
        <end position="78"/>
    </location>
</feature>
<feature type="helix" evidence="4">
    <location>
        <begin position="79"/>
        <end position="86"/>
    </location>
</feature>
<feature type="helix" evidence="4">
    <location>
        <begin position="87"/>
        <end position="90"/>
    </location>
</feature>
<feature type="strand" evidence="4">
    <location>
        <begin position="102"/>
        <end position="108"/>
    </location>
</feature>
<feature type="turn" evidence="4">
    <location>
        <begin position="109"/>
        <end position="111"/>
    </location>
</feature>
<feature type="strand" evidence="4">
    <location>
        <begin position="112"/>
        <end position="115"/>
    </location>
</feature>
<feature type="helix" evidence="4">
    <location>
        <begin position="124"/>
        <end position="126"/>
    </location>
</feature>
<feature type="strand" evidence="4">
    <location>
        <begin position="130"/>
        <end position="138"/>
    </location>
</feature>
<feature type="turn" evidence="4">
    <location>
        <begin position="139"/>
        <end position="142"/>
    </location>
</feature>
<feature type="strand" evidence="4">
    <location>
        <begin position="143"/>
        <end position="150"/>
    </location>
</feature>
<organism>
    <name type="scientific">Pyrococcus horikoshii (strain ATCC 700860 / DSM 12428 / JCM 9974 / NBRC 100139 / OT-3)</name>
    <dbReference type="NCBI Taxonomy" id="70601"/>
    <lineage>
        <taxon>Archaea</taxon>
        <taxon>Methanobacteriati</taxon>
        <taxon>Methanobacteriota</taxon>
        <taxon>Thermococci</taxon>
        <taxon>Thermococcales</taxon>
        <taxon>Thermococcaceae</taxon>
        <taxon>Pyrococcus</taxon>
    </lineage>
</organism>
<sequence length="157" mass="18152">MYSIEVRTHSALHVVKGAVVKVLGSEAKWTYSTYVKGNKGVLIVKFDRKPSDEEIREIERLANEKVKENAPIKIYELPREEAEKMFGEDMYDLFPVPEDVRILKVVVIEDWNVNACNKEHTKTTGEIGPIKIRKVRFRKSKGLLEIHFELLELENPS</sequence>
<gene>
    <name type="primary">alaXS</name>
    <name type="ordered locus">PH0574</name>
</gene>